<evidence type="ECO:0000255" key="1">
    <source>
        <dbReference type="HAMAP-Rule" id="MF_00002"/>
    </source>
</evidence>
<reference key="1">
    <citation type="journal article" date="2008" name="Genome Biol.">
        <title>A genomic analysis of the archaeal system Ignicoccus hospitalis-Nanoarchaeum equitans.</title>
        <authorList>
            <person name="Podar M."/>
            <person name="Anderson I."/>
            <person name="Makarova K.S."/>
            <person name="Elkins J.G."/>
            <person name="Ivanova N."/>
            <person name="Wall M.A."/>
            <person name="Lykidis A."/>
            <person name="Mavromatis K."/>
            <person name="Sun H."/>
            <person name="Hudson M.E."/>
            <person name="Chen W."/>
            <person name="Deciu C."/>
            <person name="Hutchison D."/>
            <person name="Eads J.R."/>
            <person name="Anderson A."/>
            <person name="Fernandes F."/>
            <person name="Szeto E."/>
            <person name="Lapidus A."/>
            <person name="Kyrpides N.C."/>
            <person name="Saier M.H. Jr."/>
            <person name="Richardson P.M."/>
            <person name="Rachel R."/>
            <person name="Huber H."/>
            <person name="Eisen J.A."/>
            <person name="Koonin E.V."/>
            <person name="Keller M."/>
            <person name="Stetter K.O."/>
        </authorList>
    </citation>
    <scope>NUCLEOTIDE SEQUENCE [LARGE SCALE GENOMIC DNA]</scope>
    <source>
        <strain>KIN4/I / DSM 18386 / JCM 14125</strain>
    </source>
</reference>
<keyword id="KW-0479">Metal-binding</keyword>
<keyword id="KW-0665">Pyrimidine biosynthesis</keyword>
<keyword id="KW-1185">Reference proteome</keyword>
<keyword id="KW-0862">Zinc</keyword>
<sequence length="157" mass="17430">MKELKVSKINNGTVIDHLPPGRALKVLRLLGIDGSEGFMVLIAMNVYSKKLGGRKDIVKIENVYLSDEQTKALALIAPTATINIIRNGEVVEKRGVTLPDVVEGILTCPNSSCISRSKREPIKSKFLVVSKRPLKLKCHYCGEIIEEKEVSNYINLR</sequence>
<proteinExistence type="inferred from homology"/>
<protein>
    <recommendedName>
        <fullName evidence="1">Aspartate carbamoyltransferase regulatory chain</fullName>
    </recommendedName>
</protein>
<dbReference type="EMBL" id="CP000816">
    <property type="protein sequence ID" value="ABU81227.1"/>
    <property type="molecule type" value="Genomic_DNA"/>
</dbReference>
<dbReference type="RefSeq" id="WP_011998079.1">
    <property type="nucleotide sequence ID" value="NC_009776.1"/>
</dbReference>
<dbReference type="SMR" id="A8A8H5"/>
<dbReference type="STRING" id="453591.Igni_0043"/>
<dbReference type="GeneID" id="5562638"/>
<dbReference type="KEGG" id="iho:Igni_0043"/>
<dbReference type="eggNOG" id="arCOG04229">
    <property type="taxonomic scope" value="Archaea"/>
</dbReference>
<dbReference type="HOGENOM" id="CLU_128576_0_0_2"/>
<dbReference type="OrthoDB" id="7000at2157"/>
<dbReference type="PhylomeDB" id="A8A8H5"/>
<dbReference type="Proteomes" id="UP000000262">
    <property type="component" value="Chromosome"/>
</dbReference>
<dbReference type="GO" id="GO:0009347">
    <property type="term" value="C:aspartate carbamoyltransferase complex"/>
    <property type="evidence" value="ECO:0007669"/>
    <property type="project" value="InterPro"/>
</dbReference>
<dbReference type="GO" id="GO:0046872">
    <property type="term" value="F:metal ion binding"/>
    <property type="evidence" value="ECO:0007669"/>
    <property type="project" value="UniProtKB-KW"/>
</dbReference>
<dbReference type="GO" id="GO:0006207">
    <property type="term" value="P:'de novo' pyrimidine nucleobase biosynthetic process"/>
    <property type="evidence" value="ECO:0007669"/>
    <property type="project" value="InterPro"/>
</dbReference>
<dbReference type="GO" id="GO:0006221">
    <property type="term" value="P:pyrimidine nucleotide biosynthetic process"/>
    <property type="evidence" value="ECO:0007669"/>
    <property type="project" value="UniProtKB-UniRule"/>
</dbReference>
<dbReference type="Gene3D" id="2.30.30.20">
    <property type="entry name" value="Aspartate carbamoyltransferase regulatory subunit, C-terminal domain"/>
    <property type="match status" value="1"/>
</dbReference>
<dbReference type="Gene3D" id="3.30.70.140">
    <property type="entry name" value="Aspartate carbamoyltransferase regulatory subunit, N-terminal domain"/>
    <property type="match status" value="1"/>
</dbReference>
<dbReference type="HAMAP" id="MF_00002">
    <property type="entry name" value="Asp_carb_tr_reg"/>
    <property type="match status" value="1"/>
</dbReference>
<dbReference type="InterPro" id="IPR020545">
    <property type="entry name" value="Asp_carbamoyltransf_reg_N"/>
</dbReference>
<dbReference type="InterPro" id="IPR002801">
    <property type="entry name" value="Asp_carbamoylTrfase_reg"/>
</dbReference>
<dbReference type="InterPro" id="IPR020542">
    <property type="entry name" value="Asp_carbamoyltrfase_reg_C"/>
</dbReference>
<dbReference type="InterPro" id="IPR036792">
    <property type="entry name" value="Asp_carbatrfase_reg_C_sf"/>
</dbReference>
<dbReference type="InterPro" id="IPR036793">
    <property type="entry name" value="Asp_carbatrfase_reg_N_sf"/>
</dbReference>
<dbReference type="NCBIfam" id="TIGR00240">
    <property type="entry name" value="ATCase_reg"/>
    <property type="match status" value="1"/>
</dbReference>
<dbReference type="PANTHER" id="PTHR35805">
    <property type="entry name" value="ASPARTATE CARBAMOYLTRANSFERASE REGULATORY CHAIN"/>
    <property type="match status" value="1"/>
</dbReference>
<dbReference type="PANTHER" id="PTHR35805:SF1">
    <property type="entry name" value="ASPARTATE CARBAMOYLTRANSFERASE REGULATORY CHAIN"/>
    <property type="match status" value="1"/>
</dbReference>
<dbReference type="Pfam" id="PF01948">
    <property type="entry name" value="PyrI"/>
    <property type="match status" value="1"/>
</dbReference>
<dbReference type="Pfam" id="PF02748">
    <property type="entry name" value="PyrI_C"/>
    <property type="match status" value="1"/>
</dbReference>
<dbReference type="SUPFAM" id="SSF57825">
    <property type="entry name" value="Aspartate carbamoyltransferase, Regulatory-chain, C-terminal domain"/>
    <property type="match status" value="1"/>
</dbReference>
<dbReference type="SUPFAM" id="SSF54893">
    <property type="entry name" value="Aspartate carbamoyltransferase, Regulatory-chain, N-terminal domain"/>
    <property type="match status" value="1"/>
</dbReference>
<feature type="chain" id="PRO_0000321500" description="Aspartate carbamoyltransferase regulatory chain">
    <location>
        <begin position="1"/>
        <end position="157"/>
    </location>
</feature>
<feature type="binding site" evidence="1">
    <location>
        <position position="108"/>
    </location>
    <ligand>
        <name>Zn(2+)</name>
        <dbReference type="ChEBI" id="CHEBI:29105"/>
    </ligand>
</feature>
<feature type="binding site" evidence="1">
    <location>
        <position position="113"/>
    </location>
    <ligand>
        <name>Zn(2+)</name>
        <dbReference type="ChEBI" id="CHEBI:29105"/>
    </ligand>
</feature>
<feature type="binding site" evidence="1">
    <location>
        <position position="138"/>
    </location>
    <ligand>
        <name>Zn(2+)</name>
        <dbReference type="ChEBI" id="CHEBI:29105"/>
    </ligand>
</feature>
<feature type="binding site" evidence="1">
    <location>
        <position position="141"/>
    </location>
    <ligand>
        <name>Zn(2+)</name>
        <dbReference type="ChEBI" id="CHEBI:29105"/>
    </ligand>
</feature>
<name>PYRI_IGNH4</name>
<accession>A8A8H5</accession>
<comment type="function">
    <text evidence="1">Involved in allosteric regulation of aspartate carbamoyltransferase.</text>
</comment>
<comment type="cofactor">
    <cofactor evidence="1">
        <name>Zn(2+)</name>
        <dbReference type="ChEBI" id="CHEBI:29105"/>
    </cofactor>
    <text evidence="1">Binds 1 zinc ion per subunit.</text>
</comment>
<comment type="subunit">
    <text evidence="1">Contains catalytic and regulatory chains.</text>
</comment>
<comment type="similarity">
    <text evidence="1">Belongs to the PyrI family.</text>
</comment>
<organism>
    <name type="scientific">Ignicoccus hospitalis (strain KIN4/I / DSM 18386 / JCM 14125)</name>
    <dbReference type="NCBI Taxonomy" id="453591"/>
    <lineage>
        <taxon>Archaea</taxon>
        <taxon>Thermoproteota</taxon>
        <taxon>Thermoprotei</taxon>
        <taxon>Desulfurococcales</taxon>
        <taxon>Desulfurococcaceae</taxon>
        <taxon>Ignicoccus</taxon>
    </lineage>
</organism>
<gene>
    <name evidence="1" type="primary">pyrI</name>
    <name type="ordered locus">Igni_0043</name>
</gene>